<keyword id="KW-1003">Cell membrane</keyword>
<keyword id="KW-0472">Membrane</keyword>
<keyword id="KW-1185">Reference proteome</keyword>
<keyword id="KW-0812">Transmembrane</keyword>
<keyword id="KW-1133">Transmembrane helix</keyword>
<keyword id="KW-0813">Transport</keyword>
<sequence>MSDACIYCKTAQRCPSDMIQAGPVALIRKLRWLYAPDPVMAGYALRTTCTSLLALGIALWMELGSPQWAALTVWMVAQGTRGRSLAKAKWHLFGMVVGVISGITLVAAIPQAPLMFILLLAVGIGTFCMIGTFMPGPASMTNYRIHGMRASGFTYAIVSLDGIADPHHIFAISMSRATYILLGIVLEASISGLFQLGLTKRTRHQLASTFEDTLKPALTAIAGILVGKEGAMQNVQAIFAQITTLGDQVEFAEVELGRHDHAGDHARAALADIAVLLARALDLATLMRLPLSQDDMFRQEAEAIRDMFLKLPARLEETESMASILADLLTLRRQCRQKVVSDFSTAQPDDAAREAVLRHGMLQQALVELIDALRMALTQFEASRHPGSHDHFHSPIRSYRDWQQAITNSLRSSVTVFGAGLIWICTAWPSGLTFIMFVCIVCSLFSTLERPALATQAFLRGACCAVVAAGILNLALMGKSTTFEMLGMWSGLAMMIGGLAFAYPPLTLPAVSYNLFLPILIGPSNQAKTDEIVYFNTALPLVLGLLYASWMYRVFLPYDPAHQRWTMREHILRDLHRIADGRAQETVDSVVSRNVDRFVRLMTNSGSTPSPVIQAYLTGILSGMRVMLNLLRLQAIRRDTRLNPEAGQALALIMGRMSHFSGRYHGHYGRTLRATKLAILRLRTCERNEDRPRERFVLIAALTSLDVIATELDTNRIFFDARSPYLDPSLTPAELESTG</sequence>
<organism>
    <name type="scientific">Gluconobacter oxydans (strain 621H)</name>
    <name type="common">Gluconobacter suboxydans</name>
    <dbReference type="NCBI Taxonomy" id="290633"/>
    <lineage>
        <taxon>Bacteria</taxon>
        <taxon>Pseudomonadati</taxon>
        <taxon>Pseudomonadota</taxon>
        <taxon>Alphaproteobacteria</taxon>
        <taxon>Acetobacterales</taxon>
        <taxon>Acetobacteraceae</taxon>
        <taxon>Gluconobacter</taxon>
    </lineage>
</organism>
<accession>O05543</accession>
<accession>Q5FSW5</accession>
<protein>
    <recommendedName>
        <fullName>Uncharacterized transporter GOX0755</fullName>
    </recommendedName>
</protein>
<reference key="1">
    <citation type="journal article" date="2005" name="Nat. Biotechnol.">
        <title>Complete genome sequence of the acetic acid bacterium Gluconobacter oxydans.</title>
        <authorList>
            <person name="Prust C."/>
            <person name="Hoffmeister M."/>
            <person name="Liesegang H."/>
            <person name="Wiezer A."/>
            <person name="Fricke W.F."/>
            <person name="Ehrenreich A."/>
            <person name="Gottschalk G."/>
            <person name="Deppenmeier U."/>
        </authorList>
    </citation>
    <scope>NUCLEOTIDE SEQUENCE [LARGE SCALE GENOMIC DNA]</scope>
    <source>
        <strain>621H</strain>
    </source>
</reference>
<reference key="2">
    <citation type="journal article" date="1997" name="Appl. Environ. Microbiol.">
        <title>Characterization of the genes encoding the three-component membrane-bound alcohol dehydrogenase from Gluconobacter suboxydans and their expression in Acetobacter pasteurianus.</title>
        <authorList>
            <person name="Kondo K."/>
            <person name="Horinouchi S."/>
        </authorList>
    </citation>
    <scope>NUCLEOTIDE SEQUENCE [GENOMIC DNA] OF 255-739</scope>
    <source>
        <strain>ATCC 621 / DSM 50049 / NBRC 3172 / NCIMB 7069 / NRRL B-72</strain>
    </source>
</reference>
<evidence type="ECO:0000255" key="1"/>
<evidence type="ECO:0000305" key="2"/>
<dbReference type="EMBL" id="CP000009">
    <property type="protein sequence ID" value="AAW60531.1"/>
    <property type="molecule type" value="Genomic_DNA"/>
</dbReference>
<dbReference type="EMBL" id="D86440">
    <property type="protein sequence ID" value="BAA19755.1"/>
    <property type="status" value="ALT_FRAME"/>
    <property type="molecule type" value="Genomic_DNA"/>
</dbReference>
<dbReference type="STRING" id="290633.GOX0755"/>
<dbReference type="KEGG" id="gox:GOX0755"/>
<dbReference type="eggNOG" id="COG1289">
    <property type="taxonomic scope" value="Bacteria"/>
</dbReference>
<dbReference type="HOGENOM" id="CLU_013927_1_1_5"/>
<dbReference type="Proteomes" id="UP000006375">
    <property type="component" value="Chromosome"/>
</dbReference>
<dbReference type="GO" id="GO:0005886">
    <property type="term" value="C:plasma membrane"/>
    <property type="evidence" value="ECO:0007669"/>
    <property type="project" value="UniProtKB-SubCell"/>
</dbReference>
<dbReference type="GO" id="GO:0022857">
    <property type="term" value="F:transmembrane transporter activity"/>
    <property type="evidence" value="ECO:0007669"/>
    <property type="project" value="InterPro"/>
</dbReference>
<dbReference type="InterPro" id="IPR006726">
    <property type="entry name" value="PHBA_efflux_AaeB/fusaric-R"/>
</dbReference>
<dbReference type="Pfam" id="PF04632">
    <property type="entry name" value="FUSC"/>
    <property type="match status" value="1"/>
</dbReference>
<gene>
    <name type="ordered locus">GOX0755</name>
</gene>
<proteinExistence type="inferred from homology"/>
<feature type="chain" id="PRO_0000210097" description="Uncharacterized transporter GOX0755">
    <location>
        <begin position="1"/>
        <end position="739"/>
    </location>
</feature>
<feature type="transmembrane region" description="Helical" evidence="1">
    <location>
        <begin position="53"/>
        <end position="73"/>
    </location>
</feature>
<feature type="transmembrane region" description="Helical" evidence="1">
    <location>
        <begin position="90"/>
        <end position="110"/>
    </location>
</feature>
<feature type="transmembrane region" description="Helical" evidence="1">
    <location>
        <begin position="114"/>
        <end position="134"/>
    </location>
</feature>
<feature type="transmembrane region" description="Helical" evidence="1">
    <location>
        <begin position="178"/>
        <end position="198"/>
    </location>
</feature>
<feature type="transmembrane region" description="Helical" evidence="1">
    <location>
        <begin position="421"/>
        <end position="441"/>
    </location>
</feature>
<feature type="transmembrane region" description="Helical" evidence="1">
    <location>
        <begin position="457"/>
        <end position="477"/>
    </location>
</feature>
<feature type="transmembrane region" description="Helical" evidence="1">
    <location>
        <begin position="491"/>
        <end position="511"/>
    </location>
</feature>
<feature type="transmembrane region" description="Helical" evidence="1">
    <location>
        <begin position="532"/>
        <end position="552"/>
    </location>
</feature>
<feature type="sequence conflict" description="In Ref. 2; BAA19755." evidence="2" ref="2">
    <original>Q</original>
    <variation>K</variation>
    <location>
        <position position="563"/>
    </location>
</feature>
<feature type="sequence conflict" description="In Ref. 2; BAA19755." evidence="2" ref="2">
    <original>IAD</original>
    <variation>LAH</variation>
    <location>
        <begin position="578"/>
        <end position="580"/>
    </location>
</feature>
<feature type="sequence conflict" description="In Ref. 2; BAA19755." evidence="2" ref="2">
    <original>QETV</original>
    <variation>AGTD</variation>
    <location>
        <begin position="584"/>
        <end position="587"/>
    </location>
</feature>
<name>Y755_GLUOX</name>
<comment type="subcellular location">
    <subcellularLocation>
        <location evidence="2">Cell membrane</location>
        <topology evidence="2">Multi-pass membrane protein</topology>
    </subcellularLocation>
</comment>
<comment type="similarity">
    <text evidence="2">Belongs to the aromatic acid exporter ArAE (TC 2.A.85) family.</text>
</comment>
<comment type="sequence caution" evidence="2">
    <conflict type="frameshift">
        <sequence resource="EMBL-CDS" id="BAA19755"/>
    </conflict>
</comment>